<gene>
    <name evidence="1" type="primary">glgB</name>
    <name type="ordered locus">YpsIP31758_4006</name>
</gene>
<feature type="chain" id="PRO_1000061994" description="1,4-alpha-glucan branching enzyme GlgB">
    <location>
        <begin position="1"/>
        <end position="727"/>
    </location>
</feature>
<feature type="active site" description="Nucleophile" evidence="1">
    <location>
        <position position="405"/>
    </location>
</feature>
<feature type="active site" description="Proton donor" evidence="1">
    <location>
        <position position="458"/>
    </location>
</feature>
<reference key="1">
    <citation type="journal article" date="2007" name="PLoS Genet.">
        <title>The complete genome sequence of Yersinia pseudotuberculosis IP31758, the causative agent of Far East scarlet-like fever.</title>
        <authorList>
            <person name="Eppinger M."/>
            <person name="Rosovitz M.J."/>
            <person name="Fricke W.F."/>
            <person name="Rasko D.A."/>
            <person name="Kokorina G."/>
            <person name="Fayolle C."/>
            <person name="Lindler L.E."/>
            <person name="Carniel E."/>
            <person name="Ravel J."/>
        </authorList>
    </citation>
    <scope>NUCLEOTIDE SEQUENCE [LARGE SCALE GENOMIC DNA]</scope>
    <source>
        <strain>IP 31758</strain>
    </source>
</reference>
<dbReference type="EC" id="2.4.1.18" evidence="1"/>
<dbReference type="EMBL" id="CP000720">
    <property type="protein sequence ID" value="ABS46943.1"/>
    <property type="molecule type" value="Genomic_DNA"/>
</dbReference>
<dbReference type="RefSeq" id="WP_012105901.1">
    <property type="nucleotide sequence ID" value="NC_009708.1"/>
</dbReference>
<dbReference type="SMR" id="A7FNX5"/>
<dbReference type="CAZy" id="CBM48">
    <property type="family name" value="Carbohydrate-Binding Module Family 48"/>
</dbReference>
<dbReference type="CAZy" id="GH13">
    <property type="family name" value="Glycoside Hydrolase Family 13"/>
</dbReference>
<dbReference type="KEGG" id="ypi:YpsIP31758_4006"/>
<dbReference type="HOGENOM" id="CLU_004245_3_2_6"/>
<dbReference type="UniPathway" id="UPA00164"/>
<dbReference type="Proteomes" id="UP000002412">
    <property type="component" value="Chromosome"/>
</dbReference>
<dbReference type="GO" id="GO:0005829">
    <property type="term" value="C:cytosol"/>
    <property type="evidence" value="ECO:0007669"/>
    <property type="project" value="TreeGrafter"/>
</dbReference>
<dbReference type="GO" id="GO:0003844">
    <property type="term" value="F:1,4-alpha-glucan branching enzyme activity"/>
    <property type="evidence" value="ECO:0007669"/>
    <property type="project" value="UniProtKB-UniRule"/>
</dbReference>
<dbReference type="GO" id="GO:0043169">
    <property type="term" value="F:cation binding"/>
    <property type="evidence" value="ECO:0007669"/>
    <property type="project" value="InterPro"/>
</dbReference>
<dbReference type="GO" id="GO:0004553">
    <property type="term" value="F:hydrolase activity, hydrolyzing O-glycosyl compounds"/>
    <property type="evidence" value="ECO:0007669"/>
    <property type="project" value="InterPro"/>
</dbReference>
<dbReference type="GO" id="GO:0005978">
    <property type="term" value="P:glycogen biosynthetic process"/>
    <property type="evidence" value="ECO:0007669"/>
    <property type="project" value="UniProtKB-UniRule"/>
</dbReference>
<dbReference type="CDD" id="cd11322">
    <property type="entry name" value="AmyAc_Glg_BE"/>
    <property type="match status" value="1"/>
</dbReference>
<dbReference type="CDD" id="cd02855">
    <property type="entry name" value="E_set_GBE_prok_N"/>
    <property type="match status" value="1"/>
</dbReference>
<dbReference type="FunFam" id="2.60.40.10:FF:000169">
    <property type="entry name" value="1,4-alpha-glucan branching enzyme GlgB"/>
    <property type="match status" value="1"/>
</dbReference>
<dbReference type="FunFam" id="2.60.40.1180:FF:000002">
    <property type="entry name" value="1,4-alpha-glucan branching enzyme GlgB"/>
    <property type="match status" value="1"/>
</dbReference>
<dbReference type="FunFam" id="3.20.20.80:FF:000003">
    <property type="entry name" value="1,4-alpha-glucan branching enzyme GlgB"/>
    <property type="match status" value="1"/>
</dbReference>
<dbReference type="Gene3D" id="3.20.20.80">
    <property type="entry name" value="Glycosidases"/>
    <property type="match status" value="1"/>
</dbReference>
<dbReference type="Gene3D" id="2.60.40.1180">
    <property type="entry name" value="Golgi alpha-mannosidase II"/>
    <property type="match status" value="1"/>
</dbReference>
<dbReference type="Gene3D" id="2.60.40.10">
    <property type="entry name" value="Immunoglobulins"/>
    <property type="match status" value="2"/>
</dbReference>
<dbReference type="HAMAP" id="MF_00685">
    <property type="entry name" value="GlgB"/>
    <property type="match status" value="1"/>
</dbReference>
<dbReference type="InterPro" id="IPR006048">
    <property type="entry name" value="A-amylase/branching_C"/>
</dbReference>
<dbReference type="InterPro" id="IPR037439">
    <property type="entry name" value="Branching_enzy"/>
</dbReference>
<dbReference type="InterPro" id="IPR006407">
    <property type="entry name" value="GlgB"/>
</dbReference>
<dbReference type="InterPro" id="IPR054169">
    <property type="entry name" value="GlgB_N"/>
</dbReference>
<dbReference type="InterPro" id="IPR044143">
    <property type="entry name" value="GlgB_N_E_set_prok"/>
</dbReference>
<dbReference type="InterPro" id="IPR006047">
    <property type="entry name" value="Glyco_hydro_13_cat_dom"/>
</dbReference>
<dbReference type="InterPro" id="IPR004193">
    <property type="entry name" value="Glyco_hydro_13_N"/>
</dbReference>
<dbReference type="InterPro" id="IPR013780">
    <property type="entry name" value="Glyco_hydro_b"/>
</dbReference>
<dbReference type="InterPro" id="IPR017853">
    <property type="entry name" value="Glycoside_hydrolase_SF"/>
</dbReference>
<dbReference type="InterPro" id="IPR013783">
    <property type="entry name" value="Ig-like_fold"/>
</dbReference>
<dbReference type="InterPro" id="IPR014756">
    <property type="entry name" value="Ig_E-set"/>
</dbReference>
<dbReference type="NCBIfam" id="TIGR01515">
    <property type="entry name" value="branching_enzym"/>
    <property type="match status" value="1"/>
</dbReference>
<dbReference type="NCBIfam" id="NF003811">
    <property type="entry name" value="PRK05402.1"/>
    <property type="match status" value="1"/>
</dbReference>
<dbReference type="NCBIfam" id="NF008967">
    <property type="entry name" value="PRK12313.1"/>
    <property type="match status" value="1"/>
</dbReference>
<dbReference type="PANTHER" id="PTHR43651">
    <property type="entry name" value="1,4-ALPHA-GLUCAN-BRANCHING ENZYME"/>
    <property type="match status" value="1"/>
</dbReference>
<dbReference type="PANTHER" id="PTHR43651:SF3">
    <property type="entry name" value="1,4-ALPHA-GLUCAN-BRANCHING ENZYME"/>
    <property type="match status" value="1"/>
</dbReference>
<dbReference type="Pfam" id="PF00128">
    <property type="entry name" value="Alpha-amylase"/>
    <property type="match status" value="1"/>
</dbReference>
<dbReference type="Pfam" id="PF02806">
    <property type="entry name" value="Alpha-amylase_C"/>
    <property type="match status" value="1"/>
</dbReference>
<dbReference type="Pfam" id="PF02922">
    <property type="entry name" value="CBM_48"/>
    <property type="match status" value="1"/>
</dbReference>
<dbReference type="Pfam" id="PF22019">
    <property type="entry name" value="GlgB_N"/>
    <property type="match status" value="1"/>
</dbReference>
<dbReference type="PIRSF" id="PIRSF000463">
    <property type="entry name" value="GlgB"/>
    <property type="match status" value="1"/>
</dbReference>
<dbReference type="SMART" id="SM00642">
    <property type="entry name" value="Aamy"/>
    <property type="match status" value="1"/>
</dbReference>
<dbReference type="SUPFAM" id="SSF51445">
    <property type="entry name" value="(Trans)glycosidases"/>
    <property type="match status" value="1"/>
</dbReference>
<dbReference type="SUPFAM" id="SSF81296">
    <property type="entry name" value="E set domains"/>
    <property type="match status" value="2"/>
</dbReference>
<dbReference type="SUPFAM" id="SSF51011">
    <property type="entry name" value="Glycosyl hydrolase domain"/>
    <property type="match status" value="1"/>
</dbReference>
<organism>
    <name type="scientific">Yersinia pseudotuberculosis serotype O:1b (strain IP 31758)</name>
    <dbReference type="NCBI Taxonomy" id="349747"/>
    <lineage>
        <taxon>Bacteria</taxon>
        <taxon>Pseudomonadati</taxon>
        <taxon>Pseudomonadota</taxon>
        <taxon>Gammaproteobacteria</taxon>
        <taxon>Enterobacterales</taxon>
        <taxon>Yersiniaceae</taxon>
        <taxon>Yersinia</taxon>
    </lineage>
</organism>
<evidence type="ECO:0000255" key="1">
    <source>
        <dbReference type="HAMAP-Rule" id="MF_00685"/>
    </source>
</evidence>
<proteinExistence type="inferred from homology"/>
<keyword id="KW-0119">Carbohydrate metabolism</keyword>
<keyword id="KW-0320">Glycogen biosynthesis</keyword>
<keyword id="KW-0321">Glycogen metabolism</keyword>
<keyword id="KW-0328">Glycosyltransferase</keyword>
<keyword id="KW-0808">Transferase</keyword>
<name>GLGB_YERP3</name>
<sequence length="727" mass="84168">MPVLPDRQVINQLISGHYGDPFSILGMHETSQGLQVCALLPDAQEVWLVETENGRRIAQLTLEDPRGFFIAQLTRRKKSFRYQFAVTWQENPQIIDDPYRFGPLLQDIDSWLLAEGTHLRPYERLGAHLMRLDGVPGVSFAVWAPNAQRVSVVGDFNFWDGRRHPMRLRRENGIWELFLPGIEAGQLYKFEIIDCHGQVRLKADPYAFEAQMRPETASLISPLPDVVKSSAARQKANDLCSPVSIYEVHLGSWRRHTDNNFWLSYRELADQLVEYVKYMGFTHVELLPINEHPFDGSWGYQPLGLYAPTRRYGTPEDFKAFVAKFHQAGINVILDWVPGHFPSDEHGLSTFDGTALYEYADPREGYHQDWNTLIYNYGRNEVRNYLAGNAFYWMERFGIDALRIDAVASMIYRDYSRAEGQWVPNYYGGRENLEAIAFLRYTNKTIGVERPGSVTMAEESTDFPGVTLPPDIGGLGFNYKWNMGWMHDTLNYMQCDPVHRKYHHNLMTFGMLYAYTENFILPLSHDEVVHGKRSILDRMPGDAWQKFANLRAYYAFMWAHPGKKLLFMGCEFAQGREWNFETSLDWHLLDDENGWHSGVQRLVRDLNHCYRQYAPLYEWDYQPAGFEWLVVDDHENSVFAFLRRDAEGHELIAISNFTPVPRYHYRVGIPQGGHYREVLNSDSAFYCGSNLGNQGGIDSHHVRSHNHEHSLLLTLPPLATIYLLREN</sequence>
<comment type="function">
    <text evidence="1">Catalyzes the formation of the alpha-1,6-glucosidic linkages in glycogen by scission of a 1,4-alpha-linked oligosaccharide from growing alpha-1,4-glucan chains and the subsequent attachment of the oligosaccharide to the alpha-1,6 position.</text>
</comment>
<comment type="catalytic activity">
    <reaction evidence="1">
        <text>Transfers a segment of a (1-&gt;4)-alpha-D-glucan chain to a primary hydroxy group in a similar glucan chain.</text>
        <dbReference type="EC" id="2.4.1.18"/>
    </reaction>
</comment>
<comment type="pathway">
    <text evidence="1">Glycan biosynthesis; glycogen biosynthesis.</text>
</comment>
<comment type="subunit">
    <text evidence="1">Monomer.</text>
</comment>
<comment type="similarity">
    <text evidence="1">Belongs to the glycosyl hydrolase 13 family. GlgB subfamily.</text>
</comment>
<protein>
    <recommendedName>
        <fullName evidence="1">1,4-alpha-glucan branching enzyme GlgB</fullName>
        <ecNumber evidence="1">2.4.1.18</ecNumber>
    </recommendedName>
    <alternativeName>
        <fullName evidence="1">1,4-alpha-D-glucan:1,4-alpha-D-glucan 6-glucosyl-transferase</fullName>
    </alternativeName>
    <alternativeName>
        <fullName evidence="1">Alpha-(1-&gt;4)-glucan branching enzyme</fullName>
    </alternativeName>
    <alternativeName>
        <fullName evidence="1">Glycogen branching enzyme</fullName>
        <shortName evidence="1">BE</shortName>
    </alternativeName>
</protein>
<accession>A7FNX5</accession>